<gene>
    <name type="primary">P4ha2</name>
</gene>
<keyword id="KW-0025">Alternative splicing</keyword>
<keyword id="KW-0223">Dioxygenase</keyword>
<keyword id="KW-0256">Endoplasmic reticulum</keyword>
<keyword id="KW-0325">Glycoprotein</keyword>
<keyword id="KW-0408">Iron</keyword>
<keyword id="KW-0479">Metal-binding</keyword>
<keyword id="KW-0560">Oxidoreductase</keyword>
<keyword id="KW-1185">Reference proteome</keyword>
<keyword id="KW-0732">Signal</keyword>
<keyword id="KW-0802">TPR repeat</keyword>
<keyword id="KW-0847">Vitamin C</keyword>
<sequence length="537" mass="61002">MKLQVLVLVLLMSWFGVLSWVQAEFFTSIGHMTDLIYAEKDLVQSLKEYILVEEAKLAKIKSWASKMEALTSRSAADPEGYLAHPVNAYKLVKRLNTDWPALGDLVLQDASAGFVANLSVQRQFFPTDEDESGAARALMRLQDTYKLDPDTISRGELPGTKYQAMLSVDDCFGLGRSAYNEGDYYHTVLWMEQVLKQLDAGEEATVTKSLVLDYLSYAVFQLGDLHRAVELTRRLLSLDPSHERAGGNLRYFERLLEEERGKSLSNQTDAGLATQENLYERPTDYLPERDVYESLCRGEGVKLTPRRQKKLFCRYHHGNRVPQLLIAPFKEEDEWDSPHIVRYYDVMSDEEIERIKEIAKPKLARATVRDPKTGVLTVASYRVSKSSWLEEDDDPVVARVNRRMQHITGLTVKTAELLQVANYGMGGQYEPHFDFSRSDDEDAFKRLGTGNRVATFLNYMSDVEAGGATVFPDLGAAIWPKKGTAVFWYNLLRSGEGDYRTRHAACPVLVGCKWVSNKWFHERGQEFLRPCGTTEVD</sequence>
<feature type="signal peptide" evidence="1">
    <location>
        <begin position="1"/>
        <end position="23"/>
    </location>
</feature>
<feature type="chain" id="PRO_0000022727" description="Prolyl 4-hydroxylase subunit alpha-2">
    <location>
        <begin position="24"/>
        <end position="537"/>
    </location>
</feature>
<feature type="repeat" description="TPR">
    <location>
        <begin position="209"/>
        <end position="242"/>
    </location>
</feature>
<feature type="domain" description="Fe2OG dioxygenase" evidence="2">
    <location>
        <begin position="414"/>
        <end position="522"/>
    </location>
</feature>
<feature type="binding site" evidence="2">
    <location>
        <position position="432"/>
    </location>
    <ligand>
        <name>Fe cation</name>
        <dbReference type="ChEBI" id="CHEBI:24875"/>
    </ligand>
</feature>
<feature type="binding site" evidence="2">
    <location>
        <position position="434"/>
    </location>
    <ligand>
        <name>Fe cation</name>
        <dbReference type="ChEBI" id="CHEBI:24875"/>
    </ligand>
</feature>
<feature type="binding site" evidence="2">
    <location>
        <position position="503"/>
    </location>
    <ligand>
        <name>Fe cation</name>
        <dbReference type="ChEBI" id="CHEBI:24875"/>
    </ligand>
</feature>
<feature type="binding site" evidence="2">
    <location>
        <position position="513"/>
    </location>
    <ligand>
        <name>2-oxoglutarate</name>
        <dbReference type="ChEBI" id="CHEBI:16810"/>
    </ligand>
</feature>
<feature type="modified residue" description="N6-succinyllysine" evidence="8">
    <location>
        <position position="482"/>
    </location>
</feature>
<feature type="glycosylation site" description="N-linked (GlcNAc...) asparagine" evidence="1">
    <location>
        <position position="117"/>
    </location>
</feature>
<feature type="glycosylation site" description="N-linked (GlcNAc...) asparagine" evidence="1">
    <location>
        <position position="266"/>
    </location>
</feature>
<feature type="splice variant" id="VSP_004507" description="In isoform IIa." evidence="4">
    <original>SDDEDAFKRLGTGNRV</original>
    <variation>RPFDSGLKTEGNRL</variation>
    <location>
        <begin position="438"/>
        <end position="453"/>
    </location>
</feature>
<evidence type="ECO:0000255" key="1"/>
<evidence type="ECO:0000255" key="2">
    <source>
        <dbReference type="PROSITE-ProRule" id="PRU00805"/>
    </source>
</evidence>
<evidence type="ECO:0000269" key="3">
    <source>
    </source>
</evidence>
<evidence type="ECO:0000303" key="4">
    <source>
    </source>
</evidence>
<evidence type="ECO:0000303" key="5">
    <source>
    </source>
</evidence>
<evidence type="ECO:0000305" key="6"/>
<evidence type="ECO:0000305" key="7">
    <source>
    </source>
</evidence>
<evidence type="ECO:0007744" key="8">
    <source>
    </source>
</evidence>
<proteinExistence type="evidence at protein level"/>
<dbReference type="EC" id="1.14.11.2" evidence="3"/>
<dbReference type="EMBL" id="U16163">
    <property type="protein sequence ID" value="AAC52198.1"/>
    <property type="molecule type" value="mRNA"/>
</dbReference>
<dbReference type="EMBL" id="AJ314858">
    <property type="protein sequence ID" value="CAC85690.1"/>
    <property type="molecule type" value="Genomic_DNA"/>
</dbReference>
<dbReference type="EMBL" id="AJ314858">
    <property type="protein sequence ID" value="CAC85691.1"/>
    <property type="molecule type" value="Genomic_DNA"/>
</dbReference>
<dbReference type="EMBL" id="BC018411">
    <property type="protein sequence ID" value="AAH18411.1"/>
    <property type="molecule type" value="mRNA"/>
</dbReference>
<dbReference type="CCDS" id="CCDS24691.1">
    <molecule id="Q60716-1"/>
</dbReference>
<dbReference type="CCDS" id="CCDS48797.1">
    <molecule id="Q60716-2"/>
</dbReference>
<dbReference type="PIR" id="I49135">
    <property type="entry name" value="I49135"/>
</dbReference>
<dbReference type="RefSeq" id="NP_001129548.1">
    <molecule id="Q60716-2"/>
    <property type="nucleotide sequence ID" value="NM_001136076.2"/>
</dbReference>
<dbReference type="RefSeq" id="NP_035161.2">
    <property type="nucleotide sequence ID" value="NM_011031.2"/>
</dbReference>
<dbReference type="SMR" id="Q60716"/>
<dbReference type="BioGRID" id="202007">
    <property type="interactions" value="4"/>
</dbReference>
<dbReference type="CORUM" id="Q60716"/>
<dbReference type="FunCoup" id="Q60716">
    <property type="interactions" value="2132"/>
</dbReference>
<dbReference type="IntAct" id="Q60716">
    <property type="interactions" value="1"/>
</dbReference>
<dbReference type="STRING" id="10090.ENSMUSP00000019050"/>
<dbReference type="GlyConnect" id="2612">
    <property type="glycosylation" value="1 N-Linked glycan (1 site)"/>
</dbReference>
<dbReference type="GlyCosmos" id="Q60716">
    <property type="glycosylation" value="2 sites, 1 glycan"/>
</dbReference>
<dbReference type="GlyGen" id="Q60716">
    <property type="glycosylation" value="2 sites, 2 N-linked glycans (1 site)"/>
</dbReference>
<dbReference type="iPTMnet" id="Q60716"/>
<dbReference type="PhosphoSitePlus" id="Q60716"/>
<dbReference type="jPOST" id="Q60716"/>
<dbReference type="PaxDb" id="10090-ENSMUSP00000019050"/>
<dbReference type="PeptideAtlas" id="Q60716"/>
<dbReference type="ProteomicsDB" id="294230">
    <molecule id="Q60716-1"/>
</dbReference>
<dbReference type="ProteomicsDB" id="294231">
    <molecule id="Q60716-2"/>
</dbReference>
<dbReference type="Pumba" id="Q60716"/>
<dbReference type="Antibodypedia" id="35136">
    <property type="antibodies" value="139 antibodies from 25 providers"/>
</dbReference>
<dbReference type="DNASU" id="18452"/>
<dbReference type="Ensembl" id="ENSMUST00000093107.12">
    <molecule id="Q60716-2"/>
    <property type="protein sequence ID" value="ENSMUSP00000091749.5"/>
    <property type="gene ID" value="ENSMUSG00000018906.15"/>
</dbReference>
<dbReference type="Ensembl" id="ENSMUST00000174616.8">
    <molecule id="Q60716-2"/>
    <property type="protein sequence ID" value="ENSMUSP00000133275.2"/>
    <property type="gene ID" value="ENSMUSG00000018906.15"/>
</dbReference>
<dbReference type="GeneID" id="18452"/>
<dbReference type="KEGG" id="mmu:18452"/>
<dbReference type="AGR" id="MGI:894286"/>
<dbReference type="CTD" id="8974"/>
<dbReference type="MGI" id="MGI:894286">
    <property type="gene designation" value="P4ha2"/>
</dbReference>
<dbReference type="VEuPathDB" id="HostDB:ENSMUSG00000018906"/>
<dbReference type="eggNOG" id="KOG1591">
    <property type="taxonomic scope" value="Eukaryota"/>
</dbReference>
<dbReference type="GeneTree" id="ENSGT00940000157695"/>
<dbReference type="InParanoid" id="Q60716"/>
<dbReference type="OrthoDB" id="420380at2759"/>
<dbReference type="PhylomeDB" id="Q60716"/>
<dbReference type="Reactome" id="R-MMU-1650814">
    <property type="pathway name" value="Collagen biosynthesis and modifying enzymes"/>
</dbReference>
<dbReference type="BioGRID-ORCS" id="18452">
    <property type="hits" value="1 hit in 79 CRISPR screens"/>
</dbReference>
<dbReference type="PRO" id="PR:Q60716"/>
<dbReference type="Proteomes" id="UP000000589">
    <property type="component" value="Chromosome 11"/>
</dbReference>
<dbReference type="RNAct" id="Q60716">
    <property type="molecule type" value="protein"/>
</dbReference>
<dbReference type="Bgee" id="ENSMUSG00000018906">
    <property type="expression patterns" value="Expressed in molar tooth and 235 other cell types or tissues"/>
</dbReference>
<dbReference type="ExpressionAtlas" id="Q60716">
    <property type="expression patterns" value="baseline and differential"/>
</dbReference>
<dbReference type="GO" id="GO:0005788">
    <property type="term" value="C:endoplasmic reticulum lumen"/>
    <property type="evidence" value="ECO:0007669"/>
    <property type="project" value="UniProtKB-SubCell"/>
</dbReference>
<dbReference type="GO" id="GO:0016222">
    <property type="term" value="C:procollagen-proline 4-dioxygenase complex"/>
    <property type="evidence" value="ECO:0000314"/>
    <property type="project" value="MGI"/>
</dbReference>
<dbReference type="GO" id="GO:0005506">
    <property type="term" value="F:iron ion binding"/>
    <property type="evidence" value="ECO:0007669"/>
    <property type="project" value="InterPro"/>
</dbReference>
<dbReference type="GO" id="GO:0031418">
    <property type="term" value="F:L-ascorbic acid binding"/>
    <property type="evidence" value="ECO:0007669"/>
    <property type="project" value="UniProtKB-KW"/>
</dbReference>
<dbReference type="GO" id="GO:0004656">
    <property type="term" value="F:procollagen-proline 4-dioxygenase activity"/>
    <property type="evidence" value="ECO:0000314"/>
    <property type="project" value="MGI"/>
</dbReference>
<dbReference type="FunFam" id="1.25.40.10:FF:000006">
    <property type="entry name" value="Prolyl 4-hydroxylase subunit alpha 2"/>
    <property type="match status" value="1"/>
</dbReference>
<dbReference type="FunFam" id="2.60.120.620:FF:000001">
    <property type="entry name" value="Prolyl 4-hydroxylase subunit alpha 2"/>
    <property type="match status" value="1"/>
</dbReference>
<dbReference type="Gene3D" id="6.10.140.1460">
    <property type="match status" value="1"/>
</dbReference>
<dbReference type="Gene3D" id="2.60.120.620">
    <property type="entry name" value="q2cbj1_9rhob like domain"/>
    <property type="match status" value="1"/>
</dbReference>
<dbReference type="Gene3D" id="1.25.40.10">
    <property type="entry name" value="Tetratricopeptide repeat domain"/>
    <property type="match status" value="1"/>
</dbReference>
<dbReference type="InterPro" id="IPR005123">
    <property type="entry name" value="Oxoglu/Fe-dep_dioxygenase_dom"/>
</dbReference>
<dbReference type="InterPro" id="IPR045054">
    <property type="entry name" value="P4HA-like"/>
</dbReference>
<dbReference type="InterPro" id="IPR006620">
    <property type="entry name" value="Pro_4_hyd_alph"/>
</dbReference>
<dbReference type="InterPro" id="IPR044862">
    <property type="entry name" value="Pro_4_hyd_alph_FE2OG_OXY"/>
</dbReference>
<dbReference type="InterPro" id="IPR013547">
    <property type="entry name" value="Pro_4_hyd_alph_N"/>
</dbReference>
<dbReference type="InterPro" id="IPR011990">
    <property type="entry name" value="TPR-like_helical_dom_sf"/>
</dbReference>
<dbReference type="InterPro" id="IPR019734">
    <property type="entry name" value="TPR_rpt"/>
</dbReference>
<dbReference type="PANTHER" id="PTHR10869">
    <property type="entry name" value="PROLYL 4-HYDROXYLASE ALPHA SUBUNIT"/>
    <property type="match status" value="1"/>
</dbReference>
<dbReference type="PANTHER" id="PTHR10869:SF244">
    <property type="entry name" value="PROLYL 4-HYDROXYLASE SUBUNIT ALPHA-2"/>
    <property type="match status" value="1"/>
</dbReference>
<dbReference type="Pfam" id="PF13640">
    <property type="entry name" value="2OG-FeII_Oxy_3"/>
    <property type="match status" value="1"/>
</dbReference>
<dbReference type="Pfam" id="PF08336">
    <property type="entry name" value="P4Ha_N"/>
    <property type="match status" value="1"/>
</dbReference>
<dbReference type="Pfam" id="PF23558">
    <property type="entry name" value="TPR_P4H"/>
    <property type="match status" value="1"/>
</dbReference>
<dbReference type="SMART" id="SM00702">
    <property type="entry name" value="P4Hc"/>
    <property type="match status" value="1"/>
</dbReference>
<dbReference type="SUPFAM" id="SSF48452">
    <property type="entry name" value="TPR-like"/>
    <property type="match status" value="1"/>
</dbReference>
<dbReference type="PROSITE" id="PS51471">
    <property type="entry name" value="FE2OG_OXY"/>
    <property type="match status" value="1"/>
</dbReference>
<dbReference type="PROSITE" id="PS50005">
    <property type="entry name" value="TPR"/>
    <property type="match status" value="1"/>
</dbReference>
<dbReference type="PROSITE" id="PS50293">
    <property type="entry name" value="TPR_REGION"/>
    <property type="match status" value="1"/>
</dbReference>
<comment type="function">
    <text evidence="3">Catalyzes the post-translational formation of 4-hydroxyproline in -Xaa-Pro-Gly- sequences in collagens and other proteins.</text>
</comment>
<comment type="catalytic activity">
    <reaction evidence="3">
        <text>L-prolyl-[collagen] + 2-oxoglutarate + O2 = trans-4-hydroxy-L-prolyl-[collagen] + succinate + CO2</text>
        <dbReference type="Rhea" id="RHEA:18945"/>
        <dbReference type="Rhea" id="RHEA-COMP:11676"/>
        <dbReference type="Rhea" id="RHEA-COMP:11680"/>
        <dbReference type="ChEBI" id="CHEBI:15379"/>
        <dbReference type="ChEBI" id="CHEBI:16526"/>
        <dbReference type="ChEBI" id="CHEBI:16810"/>
        <dbReference type="ChEBI" id="CHEBI:30031"/>
        <dbReference type="ChEBI" id="CHEBI:50342"/>
        <dbReference type="ChEBI" id="CHEBI:61965"/>
        <dbReference type="EC" id="1.14.11.2"/>
    </reaction>
    <physiologicalReaction direction="left-to-right" evidence="7">
        <dbReference type="Rhea" id="RHEA:18946"/>
    </physiologicalReaction>
</comment>
<comment type="cofactor">
    <cofactor>
        <name>Fe(2+)</name>
        <dbReference type="ChEBI" id="CHEBI:29033"/>
    </cofactor>
    <text evidence="7">Binds 1 Fe(2+) ion per subunit.</text>
</comment>
<comment type="cofactor">
    <cofactor evidence="7">
        <name>L-ascorbate</name>
        <dbReference type="ChEBI" id="CHEBI:38290"/>
    </cofactor>
</comment>
<comment type="activity regulation">
    <text evidence="3">Inhibited by poly(L-proline) only at very high concentrations.</text>
</comment>
<comment type="biophysicochemical properties">
    <kinetics>
        <KM evidence="3">12 uM for 2-oxoglutarate</KM>
    </kinetics>
</comment>
<comment type="subunit">
    <text evidence="3">Heterotetramer of two alpha-2 chains and two beta chains (P4HB) (the beta chain is the multi-functional PDI), where P4HB plays the role of a structural subunit; this tetramer catalyzes the formation of 4-hydroxyproline in collagen.</text>
</comment>
<comment type="subcellular location">
    <subcellularLocation>
        <location>Endoplasmic reticulum lumen</location>
    </subcellularLocation>
</comment>
<comment type="alternative products">
    <event type="alternative splicing"/>
    <isoform>
        <id>Q60716-1</id>
        <name>IIb</name>
        <name evidence="5">alpha(II)</name>
        <sequence type="displayed"/>
    </isoform>
    <isoform>
        <id>Q60716-2</id>
        <name>IIa</name>
        <sequence type="described" ref="VSP_004507"/>
    </isoform>
</comment>
<comment type="tissue specificity">
    <text evidence="3">Expressed at least in brain, heart and lung.</text>
</comment>
<comment type="similarity">
    <text evidence="6">Belongs to the P4HA family.</text>
</comment>
<accession>Q60716</accession>
<accession>Q8VBU4</accession>
<protein>
    <recommendedName>
        <fullName>Prolyl 4-hydroxylase subunit alpha-2</fullName>
        <shortName>4-PH alpha-2</shortName>
        <ecNumber evidence="3">1.14.11.2</ecNumber>
    </recommendedName>
    <alternativeName>
        <fullName>Procollagen-proline,2-oxoglutarate-4-dioxygenase subunit alpha-2</fullName>
    </alternativeName>
</protein>
<reference key="1">
    <citation type="journal article" date="1995" name="Proc. Natl. Acad. Sci. U.S.A.">
        <title>Cloning, baculovirus expression, and characterization of a second mouse prolyl 4-hydroxylase alpha-subunit isoform: formation of an alpha 2 beta 2 tetramer with the protein disulfide-isomerase/beta subunit.</title>
        <authorList>
            <person name="Helaakoski T."/>
            <person name="Annunen P."/>
            <person name="Vuori K."/>
            <person name="Macneil I.A."/>
            <person name="Pihlajaniemi T."/>
            <person name="Kivirikko K.I."/>
        </authorList>
    </citation>
    <scope>NUCLEOTIDE SEQUENCE [MRNA] (ISOFORM IIB)</scope>
    <scope>FUNCTION</scope>
    <scope>ACTIVITY REGULATION</scope>
    <scope>SUBUNIT</scope>
    <scope>COFACTOR</scope>
    <scope>CATALYTIC ACTIVITY</scope>
    <scope>BIOPHYSICOCHEMICAL PROPERTIES</scope>
    <scope>INTERACTION WITH P4HB</scope>
    <scope>TISSUE SPECIFICITY</scope>
</reference>
<reference key="2">
    <citation type="journal article" date="2001" name="Eur. J. Biochem.">
        <title>Characterization of the human and mouse genes for the alpha subunit of type II prolyl 4-hydroxylase. Identification of a previously unknown alternatively spliced exon and its expression in various tissues.</title>
        <authorList>
            <person name="Nokelainen M."/>
            <person name="Nissi R."/>
            <person name="Kukkola L."/>
            <person name="Helaakoski T."/>
            <person name="Myllyharju J."/>
        </authorList>
    </citation>
    <scope>NUCLEOTIDE SEQUENCE (ISOFORMS IIA AND IIB)</scope>
</reference>
<reference key="3">
    <citation type="journal article" date="2004" name="Genome Res.">
        <title>The status, quality, and expansion of the NIH full-length cDNA project: the Mammalian Gene Collection (MGC).</title>
        <authorList>
            <consortium name="The MGC Project Team"/>
        </authorList>
    </citation>
    <scope>NUCLEOTIDE SEQUENCE [LARGE SCALE MRNA] (ISOFORM IIA)</scope>
</reference>
<reference key="4">
    <citation type="journal article" date="2010" name="Cell">
        <title>A tissue-specific atlas of mouse protein phosphorylation and expression.</title>
        <authorList>
            <person name="Huttlin E.L."/>
            <person name="Jedrychowski M.P."/>
            <person name="Elias J.E."/>
            <person name="Goswami T."/>
            <person name="Rad R."/>
            <person name="Beausoleil S.A."/>
            <person name="Villen J."/>
            <person name="Haas W."/>
            <person name="Sowa M.E."/>
            <person name="Gygi S.P."/>
        </authorList>
    </citation>
    <scope>IDENTIFICATION BY MASS SPECTROMETRY [LARGE SCALE ANALYSIS]</scope>
    <source>
        <tissue>Heart</tissue>
        <tissue>Lung</tissue>
    </source>
</reference>
<reference key="5">
    <citation type="journal article" date="2013" name="Mol. Cell">
        <title>SIRT5-mediated lysine desuccinylation impacts diverse metabolic pathways.</title>
        <authorList>
            <person name="Park J."/>
            <person name="Chen Y."/>
            <person name="Tishkoff D.X."/>
            <person name="Peng C."/>
            <person name="Tan M."/>
            <person name="Dai L."/>
            <person name="Xie Z."/>
            <person name="Zhang Y."/>
            <person name="Zwaans B.M."/>
            <person name="Skinner M.E."/>
            <person name="Lombard D.B."/>
            <person name="Zhao Y."/>
        </authorList>
    </citation>
    <scope>SUCCINYLATION [LARGE SCALE ANALYSIS] AT LYS-482</scope>
    <scope>IDENTIFICATION BY MASS SPECTROMETRY [LARGE SCALE ANALYSIS]</scope>
    <source>
        <tissue>Embryonic fibroblast</tissue>
    </source>
</reference>
<organism>
    <name type="scientific">Mus musculus</name>
    <name type="common">Mouse</name>
    <dbReference type="NCBI Taxonomy" id="10090"/>
    <lineage>
        <taxon>Eukaryota</taxon>
        <taxon>Metazoa</taxon>
        <taxon>Chordata</taxon>
        <taxon>Craniata</taxon>
        <taxon>Vertebrata</taxon>
        <taxon>Euteleostomi</taxon>
        <taxon>Mammalia</taxon>
        <taxon>Eutheria</taxon>
        <taxon>Euarchontoglires</taxon>
        <taxon>Glires</taxon>
        <taxon>Rodentia</taxon>
        <taxon>Myomorpha</taxon>
        <taxon>Muroidea</taxon>
        <taxon>Muridae</taxon>
        <taxon>Murinae</taxon>
        <taxon>Mus</taxon>
        <taxon>Mus</taxon>
    </lineage>
</organism>
<name>P4HA2_MOUSE</name>